<accession>Q8TX47</accession>
<organism>
    <name type="scientific">Methanopyrus kandleri (strain AV19 / DSM 6324 / JCM 9639 / NBRC 100938)</name>
    <dbReference type="NCBI Taxonomy" id="190192"/>
    <lineage>
        <taxon>Archaea</taxon>
        <taxon>Methanobacteriati</taxon>
        <taxon>Methanobacteriota</taxon>
        <taxon>Methanomada group</taxon>
        <taxon>Methanopyri</taxon>
        <taxon>Methanopyrales</taxon>
        <taxon>Methanopyraceae</taxon>
        <taxon>Methanopyrus</taxon>
    </lineage>
</organism>
<keyword id="KW-0378">Hydrolase</keyword>
<keyword id="KW-0464">Manganese</keyword>
<keyword id="KW-1185">Reference proteome</keyword>
<gene>
    <name evidence="1" type="primary">ade</name>
    <name type="synonym">adeC</name>
    <name type="ordered locus">MK0829</name>
</gene>
<dbReference type="EC" id="3.5.4.2" evidence="1"/>
<dbReference type="EMBL" id="AE009439">
    <property type="protein sequence ID" value="AAM02042.1"/>
    <property type="molecule type" value="Genomic_DNA"/>
</dbReference>
<dbReference type="SMR" id="Q8TX47"/>
<dbReference type="FunCoup" id="Q8TX47">
    <property type="interactions" value="21"/>
</dbReference>
<dbReference type="STRING" id="190192.MK0829"/>
<dbReference type="PaxDb" id="190192-MK0829"/>
<dbReference type="EnsemblBacteria" id="AAM02042">
    <property type="protein sequence ID" value="AAM02042"/>
    <property type="gene ID" value="MK0829"/>
</dbReference>
<dbReference type="KEGG" id="mka:MK0829"/>
<dbReference type="HOGENOM" id="CLU_027935_0_0_2"/>
<dbReference type="InParanoid" id="Q8TX47"/>
<dbReference type="Proteomes" id="UP000001826">
    <property type="component" value="Chromosome"/>
</dbReference>
<dbReference type="GO" id="GO:0000034">
    <property type="term" value="F:adenine deaminase activity"/>
    <property type="evidence" value="ECO:0007669"/>
    <property type="project" value="UniProtKB-UniRule"/>
</dbReference>
<dbReference type="GO" id="GO:0006146">
    <property type="term" value="P:adenine catabolic process"/>
    <property type="evidence" value="ECO:0007669"/>
    <property type="project" value="InterPro"/>
</dbReference>
<dbReference type="CDD" id="cd01295">
    <property type="entry name" value="AdeC"/>
    <property type="match status" value="1"/>
</dbReference>
<dbReference type="Gene3D" id="3.20.20.140">
    <property type="entry name" value="Metal-dependent hydrolases"/>
    <property type="match status" value="1"/>
</dbReference>
<dbReference type="Gene3D" id="2.30.40.10">
    <property type="entry name" value="Urease, subunit C, domain 1"/>
    <property type="match status" value="1"/>
</dbReference>
<dbReference type="HAMAP" id="MF_01518">
    <property type="entry name" value="Adenine_deamin"/>
    <property type="match status" value="1"/>
</dbReference>
<dbReference type="InterPro" id="IPR006679">
    <property type="entry name" value="Adenine_deam"/>
</dbReference>
<dbReference type="InterPro" id="IPR026912">
    <property type="entry name" value="Adenine_deam_C"/>
</dbReference>
<dbReference type="InterPro" id="IPR006680">
    <property type="entry name" value="Amidohydro-rel"/>
</dbReference>
<dbReference type="InterPro" id="IPR011059">
    <property type="entry name" value="Metal-dep_hydrolase_composite"/>
</dbReference>
<dbReference type="InterPro" id="IPR032466">
    <property type="entry name" value="Metal_Hydrolase"/>
</dbReference>
<dbReference type="PANTHER" id="PTHR11113:SF2">
    <property type="entry name" value="ADENINE DEAMINASE"/>
    <property type="match status" value="1"/>
</dbReference>
<dbReference type="PANTHER" id="PTHR11113">
    <property type="entry name" value="N-ACETYLGLUCOSAMINE-6-PHOSPHATE DEACETYLASE"/>
    <property type="match status" value="1"/>
</dbReference>
<dbReference type="Pfam" id="PF13382">
    <property type="entry name" value="Adenine_deam_C"/>
    <property type="match status" value="1"/>
</dbReference>
<dbReference type="Pfam" id="PF01979">
    <property type="entry name" value="Amidohydro_1"/>
    <property type="match status" value="1"/>
</dbReference>
<dbReference type="SUPFAM" id="SSF51338">
    <property type="entry name" value="Composite domain of metallo-dependent hydrolases"/>
    <property type="match status" value="1"/>
</dbReference>
<dbReference type="SUPFAM" id="SSF51556">
    <property type="entry name" value="Metallo-dependent hydrolases"/>
    <property type="match status" value="1"/>
</dbReference>
<sequence length="599" mass="65401">MARSNRRGGRGDPEDDPAWAPPGHRCAGERAVGGPTVIPRAYLPAVPAGGNESRAFQGRFVDPWFSGIRTGYVIWDGGRLLGVTRNEPEHADVIDVDGIICPGFVDAHVHVESSGLRPARYAEIVVREGTTAVVWDPHEVVNVSGELGLEWAVKTAEEALPFKFYIALPSCVPALGPPYETVEGEITVDVARKFASHPMVVSVGELMDVAGVMEGEKDEFIELKSLYGLTVDGHAPGLTGFEAMRYFAAGPETDHECSTAEEFTSRRELGVWTFVRQGSSSKDMEVALETLEDLRGVCFVTDDLHVKDMDEISLRKIVGRAIEAGFDPLESLSAVTLNPSLCYGLQSGRLVPGFHADIVVVEDLDENMELTDVWIGGKRSERVRFRDAEAELPDVELSVDPREVSFQDGKYEVRCVGLVRGSIRTEEIVREITVKDGAVKDDDVAFLVVTDRYGQGSWSIGFVEGFEELDCAVVSTVAHDSHNVVVAGRRLDDVRRALQLVSEVGGCVGAVAGDRAEFVRLDVAGLMSSSDPEEVKKSYEDVLELIRSSSGVDWDPFQALSFVTLPVVPELRLTDRGLVKVEPDEIRFVDIITDGDPVE</sequence>
<proteinExistence type="inferred from homology"/>
<reference key="1">
    <citation type="journal article" date="2002" name="Proc. Natl. Acad. Sci. U.S.A.">
        <title>The complete genome of hyperthermophile Methanopyrus kandleri AV19 and monophyly of archaeal methanogens.</title>
        <authorList>
            <person name="Slesarev A.I."/>
            <person name="Mezhevaya K.V."/>
            <person name="Makarova K.S."/>
            <person name="Polushin N.N."/>
            <person name="Shcherbinina O.V."/>
            <person name="Shakhova V.V."/>
            <person name="Belova G.I."/>
            <person name="Aravind L."/>
            <person name="Natale D.A."/>
            <person name="Rogozin I.B."/>
            <person name="Tatusov R.L."/>
            <person name="Wolf Y.I."/>
            <person name="Stetter K.O."/>
            <person name="Malykh A.G."/>
            <person name="Koonin E.V."/>
            <person name="Kozyavkin S.A."/>
        </authorList>
    </citation>
    <scope>NUCLEOTIDE SEQUENCE [LARGE SCALE GENOMIC DNA]</scope>
    <source>
        <strain>AV19 / DSM 6324 / JCM 9639 / NBRC 100938</strain>
    </source>
</reference>
<name>ADEC_METKA</name>
<comment type="catalytic activity">
    <reaction evidence="1">
        <text>adenine + H2O + H(+) = hypoxanthine + NH4(+)</text>
        <dbReference type="Rhea" id="RHEA:23688"/>
        <dbReference type="ChEBI" id="CHEBI:15377"/>
        <dbReference type="ChEBI" id="CHEBI:15378"/>
        <dbReference type="ChEBI" id="CHEBI:16708"/>
        <dbReference type="ChEBI" id="CHEBI:17368"/>
        <dbReference type="ChEBI" id="CHEBI:28938"/>
        <dbReference type="EC" id="3.5.4.2"/>
    </reaction>
</comment>
<comment type="cofactor">
    <cofactor evidence="1">
        <name>Mn(2+)</name>
        <dbReference type="ChEBI" id="CHEBI:29035"/>
    </cofactor>
</comment>
<comment type="similarity">
    <text evidence="1">Belongs to the metallo-dependent hydrolases superfamily. Adenine deaminase family.</text>
</comment>
<protein>
    <recommendedName>
        <fullName evidence="1">Adenine deaminase</fullName>
        <shortName evidence="1">Adenase</shortName>
        <shortName evidence="1">Adenine aminase</shortName>
        <ecNumber evidence="1">3.5.4.2</ecNumber>
    </recommendedName>
</protein>
<evidence type="ECO:0000255" key="1">
    <source>
        <dbReference type="HAMAP-Rule" id="MF_01518"/>
    </source>
</evidence>
<evidence type="ECO:0000256" key="2">
    <source>
        <dbReference type="SAM" id="MobiDB-lite"/>
    </source>
</evidence>
<feature type="chain" id="PRO_0000142441" description="Adenine deaminase">
    <location>
        <begin position="1"/>
        <end position="599"/>
    </location>
</feature>
<feature type="region of interest" description="Disordered" evidence="2">
    <location>
        <begin position="1"/>
        <end position="31"/>
    </location>
</feature>